<organism>
    <name type="scientific">Bacillus cereus (strain AH187)</name>
    <dbReference type="NCBI Taxonomy" id="405534"/>
    <lineage>
        <taxon>Bacteria</taxon>
        <taxon>Bacillati</taxon>
        <taxon>Bacillota</taxon>
        <taxon>Bacilli</taxon>
        <taxon>Bacillales</taxon>
        <taxon>Bacillaceae</taxon>
        <taxon>Bacillus</taxon>
        <taxon>Bacillus cereus group</taxon>
    </lineage>
</organism>
<reference key="1">
    <citation type="submission" date="2008-10" db="EMBL/GenBank/DDBJ databases">
        <title>Genome sequence of Bacillus cereus AH187.</title>
        <authorList>
            <person name="Dodson R.J."/>
            <person name="Durkin A.S."/>
            <person name="Rosovitz M.J."/>
            <person name="Rasko D.A."/>
            <person name="Kolsto A.B."/>
            <person name="Okstad O.A."/>
            <person name="Ravel J."/>
            <person name="Sutton G."/>
        </authorList>
    </citation>
    <scope>NUCLEOTIDE SEQUENCE [LARGE SCALE GENOMIC DNA]</scope>
    <source>
        <strain>AH187</strain>
    </source>
</reference>
<gene>
    <name evidence="1" type="primary">ribBA</name>
    <name type="ordered locus">BCAH187_A4245</name>
</gene>
<protein>
    <recommendedName>
        <fullName evidence="1">Riboflavin biosynthesis protein RibBA</fullName>
    </recommendedName>
    <domain>
        <recommendedName>
            <fullName evidence="1">3,4-dihydroxy-2-butanone 4-phosphate synthase</fullName>
            <shortName evidence="1">DHBP synthase</shortName>
            <ecNumber evidence="1">4.1.99.12</ecNumber>
        </recommendedName>
    </domain>
    <domain>
        <recommendedName>
            <fullName evidence="1">GTP cyclohydrolase-2</fullName>
            <ecNumber evidence="1">3.5.4.25</ecNumber>
        </recommendedName>
        <alternativeName>
            <fullName evidence="1">GTP cyclohydrolase II</fullName>
        </alternativeName>
    </domain>
</protein>
<keyword id="KW-0342">GTP-binding</keyword>
<keyword id="KW-0378">Hydrolase</keyword>
<keyword id="KW-0456">Lyase</keyword>
<keyword id="KW-0460">Magnesium</keyword>
<keyword id="KW-0464">Manganese</keyword>
<keyword id="KW-0479">Metal-binding</keyword>
<keyword id="KW-0511">Multifunctional enzyme</keyword>
<keyword id="KW-0547">Nucleotide-binding</keyword>
<keyword id="KW-0686">Riboflavin biosynthesis</keyword>
<keyword id="KW-0862">Zinc</keyword>
<dbReference type="EC" id="4.1.99.12" evidence="1"/>
<dbReference type="EC" id="3.5.4.25" evidence="1"/>
<dbReference type="EMBL" id="CP001177">
    <property type="protein sequence ID" value="ACJ82500.1"/>
    <property type="molecule type" value="Genomic_DNA"/>
</dbReference>
<dbReference type="SMR" id="B7HNM8"/>
<dbReference type="KEGG" id="bcr:BCAH187_A4245"/>
<dbReference type="HOGENOM" id="CLU_020273_1_2_9"/>
<dbReference type="UniPathway" id="UPA00275">
    <property type="reaction ID" value="UER00399"/>
</dbReference>
<dbReference type="UniPathway" id="UPA00275">
    <property type="reaction ID" value="UER00400"/>
</dbReference>
<dbReference type="Proteomes" id="UP000002214">
    <property type="component" value="Chromosome"/>
</dbReference>
<dbReference type="GO" id="GO:0005829">
    <property type="term" value="C:cytosol"/>
    <property type="evidence" value="ECO:0007669"/>
    <property type="project" value="TreeGrafter"/>
</dbReference>
<dbReference type="GO" id="GO:0008686">
    <property type="term" value="F:3,4-dihydroxy-2-butanone-4-phosphate synthase activity"/>
    <property type="evidence" value="ECO:0007669"/>
    <property type="project" value="UniProtKB-UniRule"/>
</dbReference>
<dbReference type="GO" id="GO:0005525">
    <property type="term" value="F:GTP binding"/>
    <property type="evidence" value="ECO:0007669"/>
    <property type="project" value="UniProtKB-KW"/>
</dbReference>
<dbReference type="GO" id="GO:0003935">
    <property type="term" value="F:GTP cyclohydrolase II activity"/>
    <property type="evidence" value="ECO:0007669"/>
    <property type="project" value="UniProtKB-UniRule"/>
</dbReference>
<dbReference type="GO" id="GO:0000287">
    <property type="term" value="F:magnesium ion binding"/>
    <property type="evidence" value="ECO:0007669"/>
    <property type="project" value="UniProtKB-UniRule"/>
</dbReference>
<dbReference type="GO" id="GO:0030145">
    <property type="term" value="F:manganese ion binding"/>
    <property type="evidence" value="ECO:0007669"/>
    <property type="project" value="UniProtKB-UniRule"/>
</dbReference>
<dbReference type="GO" id="GO:0008270">
    <property type="term" value="F:zinc ion binding"/>
    <property type="evidence" value="ECO:0007669"/>
    <property type="project" value="UniProtKB-UniRule"/>
</dbReference>
<dbReference type="GO" id="GO:0009231">
    <property type="term" value="P:riboflavin biosynthetic process"/>
    <property type="evidence" value="ECO:0007669"/>
    <property type="project" value="UniProtKB-UniRule"/>
</dbReference>
<dbReference type="CDD" id="cd00641">
    <property type="entry name" value="GTP_cyclohydro2"/>
    <property type="match status" value="1"/>
</dbReference>
<dbReference type="FunFam" id="3.40.50.10990:FF:000001">
    <property type="entry name" value="Riboflavin biosynthesis protein RibBA"/>
    <property type="match status" value="1"/>
</dbReference>
<dbReference type="FunFam" id="3.90.870.10:FF:000001">
    <property type="entry name" value="Riboflavin biosynthesis protein RibBA"/>
    <property type="match status" value="1"/>
</dbReference>
<dbReference type="Gene3D" id="3.90.870.10">
    <property type="entry name" value="DHBP synthase"/>
    <property type="match status" value="1"/>
</dbReference>
<dbReference type="Gene3D" id="3.40.50.10990">
    <property type="entry name" value="GTP cyclohydrolase II"/>
    <property type="match status" value="1"/>
</dbReference>
<dbReference type="HAMAP" id="MF_00179">
    <property type="entry name" value="RibA"/>
    <property type="match status" value="1"/>
</dbReference>
<dbReference type="HAMAP" id="MF_00180">
    <property type="entry name" value="RibB"/>
    <property type="match status" value="1"/>
</dbReference>
<dbReference type="HAMAP" id="MF_01283">
    <property type="entry name" value="RibBA"/>
    <property type="match status" value="1"/>
</dbReference>
<dbReference type="InterPro" id="IPR017945">
    <property type="entry name" value="DHBP_synth_RibB-like_a/b_dom"/>
</dbReference>
<dbReference type="InterPro" id="IPR000422">
    <property type="entry name" value="DHBP_synthase_RibB"/>
</dbReference>
<dbReference type="InterPro" id="IPR032677">
    <property type="entry name" value="GTP_cyclohydro_II"/>
</dbReference>
<dbReference type="InterPro" id="IPR000926">
    <property type="entry name" value="RibA"/>
</dbReference>
<dbReference type="InterPro" id="IPR036144">
    <property type="entry name" value="RibA-like_sf"/>
</dbReference>
<dbReference type="InterPro" id="IPR016299">
    <property type="entry name" value="Riboflavin_synth_RibBA"/>
</dbReference>
<dbReference type="NCBIfam" id="NF001591">
    <property type="entry name" value="PRK00393.1"/>
    <property type="match status" value="1"/>
</dbReference>
<dbReference type="NCBIfam" id="NF006803">
    <property type="entry name" value="PRK09311.1"/>
    <property type="match status" value="1"/>
</dbReference>
<dbReference type="NCBIfam" id="TIGR00505">
    <property type="entry name" value="ribA"/>
    <property type="match status" value="1"/>
</dbReference>
<dbReference type="NCBIfam" id="TIGR00506">
    <property type="entry name" value="ribB"/>
    <property type="match status" value="1"/>
</dbReference>
<dbReference type="PANTHER" id="PTHR21327:SF18">
    <property type="entry name" value="3,4-DIHYDROXY-2-BUTANONE 4-PHOSPHATE SYNTHASE"/>
    <property type="match status" value="1"/>
</dbReference>
<dbReference type="PANTHER" id="PTHR21327">
    <property type="entry name" value="GTP CYCLOHYDROLASE II-RELATED"/>
    <property type="match status" value="1"/>
</dbReference>
<dbReference type="Pfam" id="PF00926">
    <property type="entry name" value="DHBP_synthase"/>
    <property type="match status" value="1"/>
</dbReference>
<dbReference type="Pfam" id="PF00925">
    <property type="entry name" value="GTP_cyclohydro2"/>
    <property type="match status" value="1"/>
</dbReference>
<dbReference type="PIRSF" id="PIRSF001259">
    <property type="entry name" value="RibA"/>
    <property type="match status" value="1"/>
</dbReference>
<dbReference type="SUPFAM" id="SSF142695">
    <property type="entry name" value="RibA-like"/>
    <property type="match status" value="1"/>
</dbReference>
<dbReference type="SUPFAM" id="SSF55821">
    <property type="entry name" value="YrdC/RibB"/>
    <property type="match status" value="1"/>
</dbReference>
<comment type="function">
    <text evidence="1">Catalyzes the conversion of D-ribulose 5-phosphate to formate and 3,4-dihydroxy-2-butanone 4-phosphate.</text>
</comment>
<comment type="function">
    <text evidence="1">Catalyzes the conversion of GTP to 2,5-diamino-6-ribosylamino-4(3H)-pyrimidinone 5'-phosphate (DARP), formate and pyrophosphate.</text>
</comment>
<comment type="catalytic activity">
    <reaction evidence="1">
        <text>D-ribulose 5-phosphate = (2S)-2-hydroxy-3-oxobutyl phosphate + formate + H(+)</text>
        <dbReference type="Rhea" id="RHEA:18457"/>
        <dbReference type="ChEBI" id="CHEBI:15378"/>
        <dbReference type="ChEBI" id="CHEBI:15740"/>
        <dbReference type="ChEBI" id="CHEBI:58121"/>
        <dbReference type="ChEBI" id="CHEBI:58830"/>
        <dbReference type="EC" id="4.1.99.12"/>
    </reaction>
</comment>
<comment type="catalytic activity">
    <reaction evidence="1">
        <text>GTP + 4 H2O = 2,5-diamino-6-hydroxy-4-(5-phosphoribosylamino)-pyrimidine + formate + 2 phosphate + 3 H(+)</text>
        <dbReference type="Rhea" id="RHEA:23704"/>
        <dbReference type="ChEBI" id="CHEBI:15377"/>
        <dbReference type="ChEBI" id="CHEBI:15378"/>
        <dbReference type="ChEBI" id="CHEBI:15740"/>
        <dbReference type="ChEBI" id="CHEBI:37565"/>
        <dbReference type="ChEBI" id="CHEBI:43474"/>
        <dbReference type="ChEBI" id="CHEBI:58614"/>
        <dbReference type="EC" id="3.5.4.25"/>
    </reaction>
</comment>
<comment type="cofactor">
    <cofactor evidence="1">
        <name>Mg(2+)</name>
        <dbReference type="ChEBI" id="CHEBI:18420"/>
    </cofactor>
    <cofactor evidence="1">
        <name>Mn(2+)</name>
        <dbReference type="ChEBI" id="CHEBI:29035"/>
    </cofactor>
    <text evidence="1">Binds 2 divalent metal cations per subunit. Magnesium or manganese.</text>
</comment>
<comment type="cofactor">
    <cofactor evidence="1">
        <name>Zn(2+)</name>
        <dbReference type="ChEBI" id="CHEBI:29105"/>
    </cofactor>
    <text evidence="1">Binds 1 zinc ion per subunit.</text>
</comment>
<comment type="pathway">
    <text evidence="1">Cofactor biosynthesis; riboflavin biosynthesis; 2-hydroxy-3-oxobutyl phosphate from D-ribulose 5-phosphate: step 1/1.</text>
</comment>
<comment type="pathway">
    <text evidence="1">Cofactor biosynthesis; riboflavin biosynthesis; 5-amino-6-(D-ribitylamino)uracil from GTP: step 1/4.</text>
</comment>
<comment type="similarity">
    <text evidence="1">In the N-terminal section; belongs to the DHBP synthase family.</text>
</comment>
<comment type="similarity">
    <text evidence="1">In the C-terminal section; belongs to the GTP cyclohydrolase II family.</text>
</comment>
<evidence type="ECO:0000255" key="1">
    <source>
        <dbReference type="HAMAP-Rule" id="MF_01283"/>
    </source>
</evidence>
<feature type="chain" id="PRO_1000140363" description="Riboflavin biosynthesis protein RibBA">
    <location>
        <begin position="1"/>
        <end position="397"/>
    </location>
</feature>
<feature type="region of interest" description="DHBP synthase">
    <location>
        <begin position="1"/>
        <end position="199"/>
    </location>
</feature>
<feature type="region of interest" description="GTP cyclohydrolase II">
    <location>
        <begin position="200"/>
        <end position="397"/>
    </location>
</feature>
<feature type="active site" description="Proton acceptor; for GTP cyclohydrolase activity" evidence="1">
    <location>
        <position position="327"/>
    </location>
</feature>
<feature type="active site" description="Nucleophile; for GTP cyclohydrolase activity" evidence="1">
    <location>
        <position position="329"/>
    </location>
</feature>
<feature type="binding site" evidence="1">
    <location>
        <begin position="26"/>
        <end position="27"/>
    </location>
    <ligand>
        <name>D-ribulose 5-phosphate</name>
        <dbReference type="ChEBI" id="CHEBI:58121"/>
    </ligand>
</feature>
<feature type="binding site" evidence="1">
    <location>
        <position position="27"/>
    </location>
    <ligand>
        <name>Mg(2+)</name>
        <dbReference type="ChEBI" id="CHEBI:18420"/>
        <label>1</label>
    </ligand>
</feature>
<feature type="binding site" evidence="1">
    <location>
        <position position="27"/>
    </location>
    <ligand>
        <name>Mg(2+)</name>
        <dbReference type="ChEBI" id="CHEBI:18420"/>
        <label>2</label>
    </ligand>
</feature>
<feature type="binding site" evidence="1">
    <location>
        <position position="31"/>
    </location>
    <ligand>
        <name>D-ribulose 5-phosphate</name>
        <dbReference type="ChEBI" id="CHEBI:58121"/>
    </ligand>
</feature>
<feature type="binding site" evidence="1">
    <location>
        <begin position="138"/>
        <end position="142"/>
    </location>
    <ligand>
        <name>D-ribulose 5-phosphate</name>
        <dbReference type="ChEBI" id="CHEBI:58121"/>
    </ligand>
</feature>
<feature type="binding site" evidence="1">
    <location>
        <position position="141"/>
    </location>
    <ligand>
        <name>Mg(2+)</name>
        <dbReference type="ChEBI" id="CHEBI:18420"/>
        <label>2</label>
    </ligand>
</feature>
<feature type="binding site" evidence="1">
    <location>
        <position position="162"/>
    </location>
    <ligand>
        <name>D-ribulose 5-phosphate</name>
        <dbReference type="ChEBI" id="CHEBI:58121"/>
    </ligand>
</feature>
<feature type="binding site" evidence="1">
    <location>
        <begin position="250"/>
        <end position="254"/>
    </location>
    <ligand>
        <name>GTP</name>
        <dbReference type="ChEBI" id="CHEBI:37565"/>
    </ligand>
</feature>
<feature type="binding site" evidence="1">
    <location>
        <position position="255"/>
    </location>
    <ligand>
        <name>Zn(2+)</name>
        <dbReference type="ChEBI" id="CHEBI:29105"/>
        <note>catalytic</note>
    </ligand>
</feature>
<feature type="binding site" evidence="1">
    <location>
        <position position="266"/>
    </location>
    <ligand>
        <name>Zn(2+)</name>
        <dbReference type="ChEBI" id="CHEBI:29105"/>
        <note>catalytic</note>
    </ligand>
</feature>
<feature type="binding site" evidence="1">
    <location>
        <position position="268"/>
    </location>
    <ligand>
        <name>Zn(2+)</name>
        <dbReference type="ChEBI" id="CHEBI:29105"/>
        <note>catalytic</note>
    </ligand>
</feature>
<feature type="binding site" evidence="1">
    <location>
        <position position="271"/>
    </location>
    <ligand>
        <name>GTP</name>
        <dbReference type="ChEBI" id="CHEBI:37565"/>
    </ligand>
</feature>
<feature type="binding site" evidence="1">
    <location>
        <begin position="293"/>
        <end position="295"/>
    </location>
    <ligand>
        <name>GTP</name>
        <dbReference type="ChEBI" id="CHEBI:37565"/>
    </ligand>
</feature>
<feature type="binding site" evidence="1">
    <location>
        <position position="315"/>
    </location>
    <ligand>
        <name>GTP</name>
        <dbReference type="ChEBI" id="CHEBI:37565"/>
    </ligand>
</feature>
<feature type="binding site" evidence="1">
    <location>
        <position position="350"/>
    </location>
    <ligand>
        <name>GTP</name>
        <dbReference type="ChEBI" id="CHEBI:37565"/>
    </ligand>
</feature>
<feature type="binding site" evidence="1">
    <location>
        <position position="355"/>
    </location>
    <ligand>
        <name>GTP</name>
        <dbReference type="ChEBI" id="CHEBI:37565"/>
    </ligand>
</feature>
<feature type="site" description="Essential for DHBP synthase activity" evidence="1">
    <location>
        <position position="124"/>
    </location>
</feature>
<feature type="site" description="Essential for DHBP synthase activity" evidence="1">
    <location>
        <position position="162"/>
    </location>
</feature>
<proteinExistence type="inferred from homology"/>
<sequence length="397" mass="43959">MFHRIEEALEDLKQGKVVIVCDDENRENEGDFIALAEYITPETINFMITHGRGLVCVPITEGYAERLQLEPMVAHNTDSHHTAFTVSIDHVSTTTGISAHERATTIREMLNPASKGADFNRPGHIFPLIAKEGGVLRRAGHTEAAVDLAQLCGAEPAGVICEIINEDGTMARVPDLLQCAKQFDIKMITIEDLIAYRRHHETLVTREVEITLPTDFGTFHAIGYSNSLDSKEHIALVKGDISTGDPVLVRVHSECLTGDVFGSCRCDCGPQLHAALAQIEREGKGVLLYMRQEGRGIGLLNKLRAYKLQEEGFDTVEANEKLGFPADLRDYGIGAQILKDLGLQHLRLLTNNPRKIAGLQGYDLEVIERVPLQMPAKEENKTYLQTKVNKLGHLLNL</sequence>
<name>RIBBA_BACC7</name>
<accession>B7HNM8</accession>